<keyword id="KW-1043">Host membrane</keyword>
<keyword id="KW-0472">Membrane</keyword>
<keyword id="KW-0812">Transmembrane</keyword>
<keyword id="KW-1133">Transmembrane helix</keyword>
<name>VP5_IBDVC</name>
<gene>
    <name type="primary">VP5</name>
</gene>
<feature type="chain" id="PRO_0000221966" description="Protein VP5">
    <location>
        <begin position="1"/>
        <end position="145"/>
    </location>
</feature>
<feature type="topological domain" description="Cytoplasmic" evidence="2">
    <location>
        <begin position="1"/>
        <end position="68"/>
    </location>
</feature>
<feature type="transmembrane region" description="Helical" evidence="2">
    <location>
        <begin position="69"/>
        <end position="86"/>
    </location>
</feature>
<feature type="topological domain" description="Extracellular" evidence="2">
    <location>
        <begin position="87"/>
        <end position="145"/>
    </location>
</feature>
<feature type="region of interest" description="Disordered" evidence="3">
    <location>
        <begin position="1"/>
        <end position="49"/>
    </location>
</feature>
<feature type="compositionally biased region" description="Basic and acidic residues" evidence="3">
    <location>
        <begin position="1"/>
        <end position="16"/>
    </location>
</feature>
<proteinExistence type="inferred from homology"/>
<organism>
    <name type="scientific">Avian infectious bursal disease virus (strain Cu-1)</name>
    <name type="common">IBDV</name>
    <name type="synonym">Gumboro disease virus</name>
    <dbReference type="NCBI Taxonomy" id="10998"/>
    <lineage>
        <taxon>Viruses</taxon>
        <taxon>Riboviria</taxon>
        <taxon>Orthornavirae</taxon>
        <taxon>Birnaviridae</taxon>
        <taxon>Avibirnavirus</taxon>
        <taxon>Avibirnavirus gumboroense</taxon>
    </lineage>
</organism>
<organismHost>
    <name type="scientific">Gallus gallus</name>
    <name type="common">Chicken</name>
    <dbReference type="NCBI Taxonomy" id="9031"/>
</organismHost>
<organismHost>
    <name type="scientific">Meleagris gallopavo</name>
    <name type="common">Wild turkey</name>
    <dbReference type="NCBI Taxonomy" id="9103"/>
</organismHost>
<dbReference type="EMBL" id="X16107">
    <property type="protein sequence ID" value="CAA34233.1"/>
    <property type="molecule type" value="Genomic_RNA"/>
</dbReference>
<dbReference type="PIR" id="S06090">
    <property type="entry name" value="S06090"/>
</dbReference>
<dbReference type="GO" id="GO:0033644">
    <property type="term" value="C:host cell membrane"/>
    <property type="evidence" value="ECO:0007669"/>
    <property type="project" value="UniProtKB-SubCell"/>
</dbReference>
<dbReference type="GO" id="GO:0016020">
    <property type="term" value="C:membrane"/>
    <property type="evidence" value="ECO:0007669"/>
    <property type="project" value="UniProtKB-KW"/>
</dbReference>
<dbReference type="InterPro" id="IPR004284">
    <property type="entry name" value="Birna_VP5"/>
</dbReference>
<dbReference type="Pfam" id="PF03042">
    <property type="entry name" value="Birna_VP5"/>
    <property type="match status" value="1"/>
</dbReference>
<comment type="function">
    <text evidence="1">Plays a role in the release of virion progenies by disrupting the host plasma membrane.</text>
</comment>
<comment type="subcellular location">
    <subcellularLocation>
        <location>Host membrane</location>
        <topology>Single-pass membrane protein</topology>
    </subcellularLocation>
</comment>
<comment type="similarity">
    <text evidence="4">Belongs to the avibirnavirus/aquabirnavirus VP5 protein family.</text>
</comment>
<protein>
    <recommendedName>
        <fullName>Protein VP5</fullName>
    </recommendedName>
</protein>
<accession>P15481</accession>
<sequence>MVSRDQTNDRSDDKPARSNPTDCSVHTEPSDANNRTGVHSGRHPGEAHSQVRDLDLQFDCGGHRVRANCLFPWIPWLNCGCSLHTAEQWELQVRSDAPDCPEPTGQLQLLQASESESHSEVKHTSWWRLCTKRHHKRRDLPRKPE</sequence>
<evidence type="ECO:0000250" key="1"/>
<evidence type="ECO:0000255" key="2"/>
<evidence type="ECO:0000256" key="3">
    <source>
        <dbReference type="SAM" id="MobiDB-lite"/>
    </source>
</evidence>
<evidence type="ECO:0000305" key="4"/>
<reference key="1">
    <citation type="journal article" date="1989" name="Nucleic Acids Res.">
        <title>Nucleotide sequence of infectious bursal disease virus genome segment A delineates two major open reading frames.</title>
        <authorList>
            <person name="Spies U."/>
            <person name="Mueller H."/>
            <person name="Becht H."/>
        </authorList>
    </citation>
    <scope>NUCLEOTIDE SEQUENCE [GENOMIC RNA]</scope>
</reference>